<feature type="chain" id="PRO_1000149622" description="L-carnitine CoA-transferase">
    <location>
        <begin position="1"/>
        <end position="405"/>
    </location>
</feature>
<feature type="active site" description="Nucleophile" evidence="1">
    <location>
        <position position="169"/>
    </location>
</feature>
<feature type="binding site" evidence="1">
    <location>
        <position position="97"/>
    </location>
    <ligand>
        <name>CoA</name>
        <dbReference type="ChEBI" id="CHEBI:57287"/>
    </ligand>
</feature>
<feature type="binding site" evidence="1">
    <location>
        <position position="104"/>
    </location>
    <ligand>
        <name>CoA</name>
        <dbReference type="ChEBI" id="CHEBI:57287"/>
    </ligand>
</feature>
<organism>
    <name type="scientific">Escherichia coli O127:H6 (strain E2348/69 / EPEC)</name>
    <dbReference type="NCBI Taxonomy" id="574521"/>
    <lineage>
        <taxon>Bacteria</taxon>
        <taxon>Pseudomonadati</taxon>
        <taxon>Pseudomonadota</taxon>
        <taxon>Gammaproteobacteria</taxon>
        <taxon>Enterobacterales</taxon>
        <taxon>Enterobacteriaceae</taxon>
        <taxon>Escherichia</taxon>
    </lineage>
</organism>
<gene>
    <name evidence="1" type="primary">caiB</name>
    <name type="ordered locus">E2348C_0039</name>
</gene>
<keyword id="KW-0963">Cytoplasm</keyword>
<keyword id="KW-1185">Reference proteome</keyword>
<keyword id="KW-0808">Transferase</keyword>
<dbReference type="EC" id="2.8.3.21" evidence="1"/>
<dbReference type="EMBL" id="FM180568">
    <property type="protein sequence ID" value="CAS07587.1"/>
    <property type="molecule type" value="Genomic_DNA"/>
</dbReference>
<dbReference type="RefSeq" id="WP_000349968.1">
    <property type="nucleotide sequence ID" value="NC_011601.1"/>
</dbReference>
<dbReference type="SMR" id="B7UI84"/>
<dbReference type="KEGG" id="ecg:E2348C_0039"/>
<dbReference type="HOGENOM" id="CLU_033975_2_0_6"/>
<dbReference type="UniPathway" id="UPA00117"/>
<dbReference type="Proteomes" id="UP000008205">
    <property type="component" value="Chromosome"/>
</dbReference>
<dbReference type="GO" id="GO:0005737">
    <property type="term" value="C:cytoplasm"/>
    <property type="evidence" value="ECO:0007669"/>
    <property type="project" value="UniProtKB-SubCell"/>
</dbReference>
<dbReference type="GO" id="GO:0008735">
    <property type="term" value="F:L-carnitine CoA-transferase activity"/>
    <property type="evidence" value="ECO:0007669"/>
    <property type="project" value="RHEA"/>
</dbReference>
<dbReference type="GO" id="GO:0009437">
    <property type="term" value="P:carnitine metabolic process"/>
    <property type="evidence" value="ECO:0007669"/>
    <property type="project" value="UniProtKB-UniRule"/>
</dbReference>
<dbReference type="FunFam" id="3.30.1540.10:FF:000001">
    <property type="entry name" value="L-carnitine CoA-transferase"/>
    <property type="match status" value="1"/>
</dbReference>
<dbReference type="Gene3D" id="3.40.50.10540">
    <property type="entry name" value="Crotonobetainyl-coa:carnitine coa-transferase, domain 1"/>
    <property type="match status" value="1"/>
</dbReference>
<dbReference type="Gene3D" id="3.30.1540.10">
    <property type="entry name" value="formyl-coa transferase, domain 3"/>
    <property type="match status" value="1"/>
</dbReference>
<dbReference type="HAMAP" id="MF_01050">
    <property type="entry name" value="CaiB"/>
    <property type="match status" value="1"/>
</dbReference>
<dbReference type="InterPro" id="IPR050509">
    <property type="entry name" value="CoA-transferase_III"/>
</dbReference>
<dbReference type="InterPro" id="IPR023452">
    <property type="entry name" value="CoA-Trfase_CaiB"/>
</dbReference>
<dbReference type="InterPro" id="IPR003673">
    <property type="entry name" value="CoA-Trfase_fam_III"/>
</dbReference>
<dbReference type="InterPro" id="IPR044855">
    <property type="entry name" value="CoA-Trfase_III_dom3_sf"/>
</dbReference>
<dbReference type="InterPro" id="IPR023606">
    <property type="entry name" value="CoA-Trfase_III_dom_1_sf"/>
</dbReference>
<dbReference type="NCBIfam" id="NF002914">
    <property type="entry name" value="PRK03525.1"/>
    <property type="match status" value="1"/>
</dbReference>
<dbReference type="PANTHER" id="PTHR48228:SF6">
    <property type="entry name" value="L-CARNITINE COA-TRANSFERASE"/>
    <property type="match status" value="1"/>
</dbReference>
<dbReference type="PANTHER" id="PTHR48228">
    <property type="entry name" value="SUCCINYL-COA--D-CITRAMALATE COA-TRANSFERASE"/>
    <property type="match status" value="1"/>
</dbReference>
<dbReference type="Pfam" id="PF02515">
    <property type="entry name" value="CoA_transf_3"/>
    <property type="match status" value="1"/>
</dbReference>
<dbReference type="SUPFAM" id="SSF89796">
    <property type="entry name" value="CoA-transferase family III (CaiB/BaiF)"/>
    <property type="match status" value="1"/>
</dbReference>
<comment type="function">
    <text evidence="1">Catalyzes the reversible transfer of the CoA moiety from gamma-butyrobetainyl-CoA to L-carnitine to generate L-carnitinyl-CoA and gamma-butyrobetaine. Is also able to catalyze the reversible transfer of the CoA moiety from gamma-butyrobetainyl-CoA or L-carnitinyl-CoA to crotonobetaine to generate crotonobetainyl-CoA.</text>
</comment>
<comment type="catalytic activity">
    <reaction evidence="1">
        <text>crotonobetainyl-CoA + (R)-carnitine = crotonobetaine + (R)-carnitinyl-CoA</text>
        <dbReference type="Rhea" id="RHEA:28526"/>
        <dbReference type="ChEBI" id="CHEBI:16347"/>
        <dbReference type="ChEBI" id="CHEBI:17237"/>
        <dbReference type="ChEBI" id="CHEBI:60932"/>
        <dbReference type="ChEBI" id="CHEBI:60933"/>
        <dbReference type="EC" id="2.8.3.21"/>
    </reaction>
</comment>
<comment type="catalytic activity">
    <reaction evidence="1">
        <text>4-(trimethylamino)butanoyl-CoA + (R)-carnitine = (R)-carnitinyl-CoA + 4-(trimethylamino)butanoate</text>
        <dbReference type="Rhea" id="RHEA:28418"/>
        <dbReference type="ChEBI" id="CHEBI:16244"/>
        <dbReference type="ChEBI" id="CHEBI:16347"/>
        <dbReference type="ChEBI" id="CHEBI:60932"/>
        <dbReference type="ChEBI" id="CHEBI:61513"/>
        <dbReference type="EC" id="2.8.3.21"/>
    </reaction>
</comment>
<comment type="pathway">
    <text evidence="1">Amine and polyamine metabolism; carnitine metabolism.</text>
</comment>
<comment type="subunit">
    <text evidence="1">Homodimer.</text>
</comment>
<comment type="subcellular location">
    <subcellularLocation>
        <location evidence="1">Cytoplasm</location>
    </subcellularLocation>
</comment>
<comment type="similarity">
    <text evidence="1">Belongs to the CoA-transferase III family. CaiB subfamily.</text>
</comment>
<reference key="1">
    <citation type="journal article" date="2009" name="J. Bacteriol.">
        <title>Complete genome sequence and comparative genome analysis of enteropathogenic Escherichia coli O127:H6 strain E2348/69.</title>
        <authorList>
            <person name="Iguchi A."/>
            <person name="Thomson N.R."/>
            <person name="Ogura Y."/>
            <person name="Saunders D."/>
            <person name="Ooka T."/>
            <person name="Henderson I.R."/>
            <person name="Harris D."/>
            <person name="Asadulghani M."/>
            <person name="Kurokawa K."/>
            <person name="Dean P."/>
            <person name="Kenny B."/>
            <person name="Quail M.A."/>
            <person name="Thurston S."/>
            <person name="Dougan G."/>
            <person name="Hayashi T."/>
            <person name="Parkhill J."/>
            <person name="Frankel G."/>
        </authorList>
    </citation>
    <scope>NUCLEOTIDE SEQUENCE [LARGE SCALE GENOMIC DNA]</scope>
    <source>
        <strain>E2348/69 / EPEC</strain>
    </source>
</reference>
<protein>
    <recommendedName>
        <fullName evidence="1">L-carnitine CoA-transferase</fullName>
        <ecNumber evidence="1">2.8.3.21</ecNumber>
    </recommendedName>
    <alternativeName>
        <fullName evidence="1">Crotonobetainyl-CoA:carnitine CoA-transferase</fullName>
    </alternativeName>
</protein>
<accession>B7UI84</accession>
<name>CAIB_ECO27</name>
<evidence type="ECO:0000255" key="1">
    <source>
        <dbReference type="HAMAP-Rule" id="MF_01050"/>
    </source>
</evidence>
<proteinExistence type="inferred from homology"/>
<sequence length="405" mass="45057">MDHLTMPKFGPLAGLRVVFSGIEIAGPFAGQMFAEWGAEVIWIENVAWADTIRVQPNYPQLSRRNLHALSLNIFKDEGREAFLKLMETTDIFIEASKGPAFARRGITDEVLWQHNPKLVIAHLSGFGQYGTEEYTNLPAYNTIAQAFSGYLIQNGDVDQPMPAFPYTADYFSGLTATTAALAALHKVRETGKGESIDIAMYEVMLRMGQYFMMDYFNGGEMCPRMTKGKDPYYAGCGLYKCADGYIVMELVGITQIAECFKDIGLAHLLGTPEIPEGTQLIHRIECPYGPLVEEKLDAWLAAHTIAEVKERFAELNIACAKVLTVPELESNPQYVARESITQWQTMDGRTCKGPNIMPKFKNNPGQIWRGMPSHGMDTAAILKNIGYSENDIQELVSKGLAKVED</sequence>